<gene>
    <name type="primary">licA</name>
    <name type="synonym">celC</name>
    <name type="ordered locus">BSU38570</name>
</gene>
<sequence length="110" mass="12185">MNEEMEQIIFQIILHGGNGRSSAMEAIAAAKSGDAEEARKKLQDAAEELSKAHHYQTELIQNEAGGEKTEMTLLMVHAQDHLMNAMTVKDMAAEIIELYEKITEQRGASI</sequence>
<accession>P46319</accession>
<organism>
    <name type="scientific">Bacillus subtilis (strain 168)</name>
    <dbReference type="NCBI Taxonomy" id="224308"/>
    <lineage>
        <taxon>Bacteria</taxon>
        <taxon>Bacillati</taxon>
        <taxon>Bacillota</taxon>
        <taxon>Bacilli</taxon>
        <taxon>Bacillales</taxon>
        <taxon>Bacillaceae</taxon>
        <taxon>Bacillus</taxon>
    </lineage>
</organism>
<keyword id="KW-0963">Cytoplasm</keyword>
<keyword id="KW-0598">Phosphotransferase system</keyword>
<keyword id="KW-1185">Reference proteome</keyword>
<keyword id="KW-0762">Sugar transport</keyword>
<keyword id="KW-0808">Transferase</keyword>
<keyword id="KW-0813">Transport</keyword>
<reference key="1">
    <citation type="journal article" date="1997" name="J. Bacteriol.">
        <title>Identification and characterization of a new beta-glucoside utilization system in Bacillus subtilis.</title>
        <authorList>
            <person name="Tobisch S."/>
            <person name="Glaser P."/>
            <person name="Krueger S."/>
            <person name="Hecker M."/>
        </authorList>
    </citation>
    <scope>NUCLEOTIDE SEQUENCE [GENOMIC DNA]</scope>
    <source>
        <strain>168</strain>
    </source>
</reference>
<reference key="2">
    <citation type="journal article" date="1996" name="Microbiology">
        <title>Sequencing of a 65 kb region of the Bacillus subtilis genome containing the lic and cel loci, and creation of a 177 kb contig covering the gnt-sacXY region.</title>
        <authorList>
            <person name="Yoshida K."/>
            <person name="Shindo K."/>
            <person name="Sano H."/>
            <person name="Seki S."/>
            <person name="Fujimura M."/>
            <person name="Yanai N."/>
            <person name="Miwa Y."/>
            <person name="Fujita Y."/>
        </authorList>
    </citation>
    <scope>NUCLEOTIDE SEQUENCE [GENOMIC DNA]</scope>
    <source>
        <strain>168 / BGSC1A1</strain>
    </source>
</reference>
<reference key="3">
    <citation type="journal article" date="1997" name="Nature">
        <title>The complete genome sequence of the Gram-positive bacterium Bacillus subtilis.</title>
        <authorList>
            <person name="Kunst F."/>
            <person name="Ogasawara N."/>
            <person name="Moszer I."/>
            <person name="Albertini A.M."/>
            <person name="Alloni G."/>
            <person name="Azevedo V."/>
            <person name="Bertero M.G."/>
            <person name="Bessieres P."/>
            <person name="Bolotin A."/>
            <person name="Borchert S."/>
            <person name="Borriss R."/>
            <person name="Boursier L."/>
            <person name="Brans A."/>
            <person name="Braun M."/>
            <person name="Brignell S.C."/>
            <person name="Bron S."/>
            <person name="Brouillet S."/>
            <person name="Bruschi C.V."/>
            <person name="Caldwell B."/>
            <person name="Capuano V."/>
            <person name="Carter N.M."/>
            <person name="Choi S.-K."/>
            <person name="Codani J.-J."/>
            <person name="Connerton I.F."/>
            <person name="Cummings N.J."/>
            <person name="Daniel R.A."/>
            <person name="Denizot F."/>
            <person name="Devine K.M."/>
            <person name="Duesterhoeft A."/>
            <person name="Ehrlich S.D."/>
            <person name="Emmerson P.T."/>
            <person name="Entian K.-D."/>
            <person name="Errington J."/>
            <person name="Fabret C."/>
            <person name="Ferrari E."/>
            <person name="Foulger D."/>
            <person name="Fritz C."/>
            <person name="Fujita M."/>
            <person name="Fujita Y."/>
            <person name="Fuma S."/>
            <person name="Galizzi A."/>
            <person name="Galleron N."/>
            <person name="Ghim S.-Y."/>
            <person name="Glaser P."/>
            <person name="Goffeau A."/>
            <person name="Golightly E.J."/>
            <person name="Grandi G."/>
            <person name="Guiseppi G."/>
            <person name="Guy B.J."/>
            <person name="Haga K."/>
            <person name="Haiech J."/>
            <person name="Harwood C.R."/>
            <person name="Henaut A."/>
            <person name="Hilbert H."/>
            <person name="Holsappel S."/>
            <person name="Hosono S."/>
            <person name="Hullo M.-F."/>
            <person name="Itaya M."/>
            <person name="Jones L.-M."/>
            <person name="Joris B."/>
            <person name="Karamata D."/>
            <person name="Kasahara Y."/>
            <person name="Klaerr-Blanchard M."/>
            <person name="Klein C."/>
            <person name="Kobayashi Y."/>
            <person name="Koetter P."/>
            <person name="Koningstein G."/>
            <person name="Krogh S."/>
            <person name="Kumano M."/>
            <person name="Kurita K."/>
            <person name="Lapidus A."/>
            <person name="Lardinois S."/>
            <person name="Lauber J."/>
            <person name="Lazarevic V."/>
            <person name="Lee S.-M."/>
            <person name="Levine A."/>
            <person name="Liu H."/>
            <person name="Masuda S."/>
            <person name="Mauel C."/>
            <person name="Medigue C."/>
            <person name="Medina N."/>
            <person name="Mellado R.P."/>
            <person name="Mizuno M."/>
            <person name="Moestl D."/>
            <person name="Nakai S."/>
            <person name="Noback M."/>
            <person name="Noone D."/>
            <person name="O'Reilly M."/>
            <person name="Ogawa K."/>
            <person name="Ogiwara A."/>
            <person name="Oudega B."/>
            <person name="Park S.-H."/>
            <person name="Parro V."/>
            <person name="Pohl T.M."/>
            <person name="Portetelle D."/>
            <person name="Porwollik S."/>
            <person name="Prescott A.M."/>
            <person name="Presecan E."/>
            <person name="Pujic P."/>
            <person name="Purnelle B."/>
            <person name="Rapoport G."/>
            <person name="Rey M."/>
            <person name="Reynolds S."/>
            <person name="Rieger M."/>
            <person name="Rivolta C."/>
            <person name="Rocha E."/>
            <person name="Roche B."/>
            <person name="Rose M."/>
            <person name="Sadaie Y."/>
            <person name="Sato T."/>
            <person name="Scanlan E."/>
            <person name="Schleich S."/>
            <person name="Schroeter R."/>
            <person name="Scoffone F."/>
            <person name="Sekiguchi J."/>
            <person name="Sekowska A."/>
            <person name="Seror S.J."/>
            <person name="Serror P."/>
            <person name="Shin B.-S."/>
            <person name="Soldo B."/>
            <person name="Sorokin A."/>
            <person name="Tacconi E."/>
            <person name="Takagi T."/>
            <person name="Takahashi H."/>
            <person name="Takemaru K."/>
            <person name="Takeuchi M."/>
            <person name="Tamakoshi A."/>
            <person name="Tanaka T."/>
            <person name="Terpstra P."/>
            <person name="Tognoni A."/>
            <person name="Tosato V."/>
            <person name="Uchiyama S."/>
            <person name="Vandenbol M."/>
            <person name="Vannier F."/>
            <person name="Vassarotti A."/>
            <person name="Viari A."/>
            <person name="Wambutt R."/>
            <person name="Wedler E."/>
            <person name="Wedler H."/>
            <person name="Weitzenegger T."/>
            <person name="Winters P."/>
            <person name="Wipat A."/>
            <person name="Yamamoto H."/>
            <person name="Yamane K."/>
            <person name="Yasumoto K."/>
            <person name="Yata K."/>
            <person name="Yoshida K."/>
            <person name="Yoshikawa H.-F."/>
            <person name="Zumstein E."/>
            <person name="Yoshikawa H."/>
            <person name="Danchin A."/>
        </authorList>
    </citation>
    <scope>NUCLEOTIDE SEQUENCE [LARGE SCALE GENOMIC DNA]</scope>
    <source>
        <strain>168</strain>
    </source>
</reference>
<protein>
    <recommendedName>
        <fullName>Lichenan-specific phosphotransferase enzyme IIA component</fullName>
    </recommendedName>
    <alternativeName>
        <fullName>EIIA-Lic</fullName>
    </alternativeName>
    <alternativeName>
        <fullName>EIII-Lic</fullName>
    </alternativeName>
    <alternativeName>
        <fullName>PTS system lichenan-specific EIIA component</fullName>
    </alternativeName>
</protein>
<comment type="function">
    <text>The phosphoenolpyruvate-dependent sugar phosphotransferase system (PTS), a major carbohydrate active -transport system, catalyzes the phosphorylation of incoming sugar substrates concomitant with their translocation across the cell membrane. This system is involved in lichenan transport.</text>
</comment>
<comment type="subcellular location">
    <subcellularLocation>
        <location evidence="3">Cytoplasm</location>
    </subcellularLocation>
</comment>
<comment type="induction">
    <text>Induced by lichenan, lichenan hydrolysate and cellobiose. Subject to carbon catabolite repression.</text>
</comment>
<comment type="domain">
    <text>The EIIA domain is phosphorylated by phospho-HPr on a histidyl residue. Then, it transfers the phosphoryl group to the EIIB domain.</text>
</comment>
<feature type="chain" id="PRO_0000186493" description="Lichenan-specific phosphotransferase enzyme IIA component">
    <location>
        <begin position="1"/>
        <end position="110"/>
    </location>
</feature>
<feature type="domain" description="PTS EIIA type-3" evidence="2">
    <location>
        <begin position="3"/>
        <end position="101"/>
    </location>
</feature>
<feature type="active site" description="Tele-phosphohistidine intermediate; by HPr" evidence="1">
    <location>
        <position position="77"/>
    </location>
</feature>
<name>PTJA_BACSU</name>
<evidence type="ECO:0000250" key="1"/>
<evidence type="ECO:0000255" key="2">
    <source>
        <dbReference type="PROSITE-ProRule" id="PRU00418"/>
    </source>
</evidence>
<evidence type="ECO:0000305" key="3"/>
<dbReference type="EMBL" id="Z49992">
    <property type="protein sequence ID" value="CAA90287.1"/>
    <property type="molecule type" value="Genomic_DNA"/>
</dbReference>
<dbReference type="EMBL" id="D83026">
    <property type="protein sequence ID" value="BAA11745.1"/>
    <property type="molecule type" value="Genomic_DNA"/>
</dbReference>
<dbReference type="EMBL" id="AL009126">
    <property type="protein sequence ID" value="CAB15883.1"/>
    <property type="molecule type" value="Genomic_DNA"/>
</dbReference>
<dbReference type="PIR" id="D69651">
    <property type="entry name" value="D69651"/>
</dbReference>
<dbReference type="RefSeq" id="NP_391736.1">
    <property type="nucleotide sequence ID" value="NC_000964.3"/>
</dbReference>
<dbReference type="RefSeq" id="WP_003227313.1">
    <property type="nucleotide sequence ID" value="NZ_OZ025638.1"/>
</dbReference>
<dbReference type="SMR" id="P46319"/>
<dbReference type="FunCoup" id="P46319">
    <property type="interactions" value="100"/>
</dbReference>
<dbReference type="STRING" id="224308.BSU38570"/>
<dbReference type="TCDB" id="4.A.3.2.2">
    <property type="family name" value="the pts lactose-n,n'-diacetylchitobiose-Beta-glucoside (lac) family"/>
</dbReference>
<dbReference type="jPOST" id="P46319"/>
<dbReference type="PaxDb" id="224308-BSU38570"/>
<dbReference type="EnsemblBacteria" id="CAB15883">
    <property type="protein sequence ID" value="CAB15883"/>
    <property type="gene ID" value="BSU_38570"/>
</dbReference>
<dbReference type="GeneID" id="937374"/>
<dbReference type="KEGG" id="bsu:BSU38570"/>
<dbReference type="PATRIC" id="fig|224308.179.peg.4176"/>
<dbReference type="eggNOG" id="COG1447">
    <property type="taxonomic scope" value="Bacteria"/>
</dbReference>
<dbReference type="InParanoid" id="P46319"/>
<dbReference type="OrthoDB" id="350602at2"/>
<dbReference type="PhylomeDB" id="P46319"/>
<dbReference type="BioCyc" id="BSUB:BSU38570-MONOMER"/>
<dbReference type="Proteomes" id="UP000001570">
    <property type="component" value="Chromosome"/>
</dbReference>
<dbReference type="GO" id="GO:0005737">
    <property type="term" value="C:cytoplasm"/>
    <property type="evidence" value="ECO:0007669"/>
    <property type="project" value="UniProtKB-SubCell"/>
</dbReference>
<dbReference type="GO" id="GO:0090563">
    <property type="term" value="F:protein-phosphocysteine-sugar phosphotransferase activity"/>
    <property type="evidence" value="ECO:0000318"/>
    <property type="project" value="GO_Central"/>
</dbReference>
<dbReference type="GO" id="GO:0009401">
    <property type="term" value="P:phosphoenolpyruvate-dependent sugar phosphotransferase system"/>
    <property type="evidence" value="ECO:0000318"/>
    <property type="project" value="GO_Central"/>
</dbReference>
<dbReference type="CDD" id="cd00215">
    <property type="entry name" value="PTS_IIA_lac"/>
    <property type="match status" value="1"/>
</dbReference>
<dbReference type="FunFam" id="1.20.58.80:FF:000001">
    <property type="entry name" value="PTS system, lactose-specific IIa component"/>
    <property type="match status" value="1"/>
</dbReference>
<dbReference type="Gene3D" id="1.20.58.80">
    <property type="entry name" value="Phosphotransferase system, lactose/cellobiose-type IIA subunit"/>
    <property type="match status" value="1"/>
</dbReference>
<dbReference type="InterPro" id="IPR003188">
    <property type="entry name" value="PTS_IIA_lac/cel"/>
</dbReference>
<dbReference type="InterPro" id="IPR036542">
    <property type="entry name" value="PTS_IIA_lac/cel_sf"/>
</dbReference>
<dbReference type="NCBIfam" id="TIGR00823">
    <property type="entry name" value="EIIA-LAC"/>
    <property type="match status" value="1"/>
</dbReference>
<dbReference type="PANTHER" id="PTHR34382">
    <property type="entry name" value="PTS SYSTEM N,N'-DIACETYLCHITOBIOSE-SPECIFIC EIIA COMPONENT"/>
    <property type="match status" value="1"/>
</dbReference>
<dbReference type="PANTHER" id="PTHR34382:SF7">
    <property type="entry name" value="PTS SYSTEM N,N'-DIACETYLCHITOBIOSE-SPECIFIC EIIA COMPONENT"/>
    <property type="match status" value="1"/>
</dbReference>
<dbReference type="Pfam" id="PF02255">
    <property type="entry name" value="PTS_IIA"/>
    <property type="match status" value="1"/>
</dbReference>
<dbReference type="PIRSF" id="PIRSF000699">
    <property type="entry name" value="PTS_IILac_III"/>
    <property type="match status" value="1"/>
</dbReference>
<dbReference type="SUPFAM" id="SSF46973">
    <property type="entry name" value="Enzyme IIa from lactose specific PTS, IIa-lac"/>
    <property type="match status" value="1"/>
</dbReference>
<dbReference type="PROSITE" id="PS51095">
    <property type="entry name" value="PTS_EIIA_TYPE_3"/>
    <property type="match status" value="1"/>
</dbReference>
<proteinExistence type="evidence at transcript level"/>